<comment type="function">
    <text evidence="1">Bidirectionally degrades single-stranded DNA into large acid-insoluble oligonucleotides, which are then degraded further into small acid-soluble oligonucleotides.</text>
</comment>
<comment type="catalytic activity">
    <reaction evidence="1">
        <text>Exonucleolytic cleavage in either 5'- to 3'- or 3'- to 5'-direction to yield nucleoside 5'-phosphates.</text>
        <dbReference type="EC" id="3.1.11.6"/>
    </reaction>
</comment>
<comment type="subunit">
    <text evidence="1">Heterooligomer composed of large and small subunits.</text>
</comment>
<comment type="subcellular location">
    <subcellularLocation>
        <location evidence="1">Cytoplasm</location>
    </subcellularLocation>
</comment>
<comment type="similarity">
    <text evidence="1">Belongs to the XseB family.</text>
</comment>
<feature type="chain" id="PRO_0000303723" description="Exodeoxyribonuclease 7 small subunit">
    <location>
        <begin position="1"/>
        <end position="81"/>
    </location>
</feature>
<name>EX7S_PARM1</name>
<keyword id="KW-0963">Cytoplasm</keyword>
<keyword id="KW-0269">Exonuclease</keyword>
<keyword id="KW-0378">Hydrolase</keyword>
<keyword id="KW-0540">Nuclease</keyword>
<organism>
    <name type="scientific">Paramagnetospirillum magneticum (strain ATCC 700264 / AMB-1)</name>
    <name type="common">Magnetospirillum magneticum</name>
    <dbReference type="NCBI Taxonomy" id="342108"/>
    <lineage>
        <taxon>Bacteria</taxon>
        <taxon>Pseudomonadati</taxon>
        <taxon>Pseudomonadota</taxon>
        <taxon>Alphaproteobacteria</taxon>
        <taxon>Rhodospirillales</taxon>
        <taxon>Magnetospirillaceae</taxon>
        <taxon>Paramagnetospirillum</taxon>
    </lineage>
</organism>
<protein>
    <recommendedName>
        <fullName evidence="1">Exodeoxyribonuclease 7 small subunit</fullName>
        <ecNumber evidence="1">3.1.11.6</ecNumber>
    </recommendedName>
    <alternativeName>
        <fullName evidence="1">Exodeoxyribonuclease VII small subunit</fullName>
        <shortName evidence="1">Exonuclease VII small subunit</shortName>
    </alternativeName>
</protein>
<gene>
    <name evidence="1" type="primary">xseB</name>
    <name type="ordered locus">amb2902</name>
</gene>
<reference key="1">
    <citation type="journal article" date="2005" name="DNA Res.">
        <title>Complete genome sequence of the facultative anaerobic magnetotactic bacterium Magnetospirillum sp. strain AMB-1.</title>
        <authorList>
            <person name="Matsunaga T."/>
            <person name="Okamura Y."/>
            <person name="Fukuda Y."/>
            <person name="Wahyudi A.T."/>
            <person name="Murase Y."/>
            <person name="Takeyama H."/>
        </authorList>
    </citation>
    <scope>NUCLEOTIDE SEQUENCE [LARGE SCALE GENOMIC DNA]</scope>
    <source>
        <strain>ATCC 700264 / AMB-1</strain>
    </source>
</reference>
<accession>Q2W369</accession>
<sequence length="81" mass="8842">MAEISTDIAAMSFEEALAELDLIVRRLEEGKGRLDDSIVAYERGALLKKHCEAKLEEARTKVERIVSGPDGSVALQAVDNV</sequence>
<dbReference type="EC" id="3.1.11.6" evidence="1"/>
<dbReference type="EMBL" id="AP007255">
    <property type="protein sequence ID" value="BAE51706.1"/>
    <property type="molecule type" value="Genomic_DNA"/>
</dbReference>
<dbReference type="RefSeq" id="WP_011385279.1">
    <property type="nucleotide sequence ID" value="NC_007626.1"/>
</dbReference>
<dbReference type="SMR" id="Q2W369"/>
<dbReference type="STRING" id="342108.amb2902"/>
<dbReference type="KEGG" id="mag:amb2902"/>
<dbReference type="HOGENOM" id="CLU_145918_0_3_5"/>
<dbReference type="OrthoDB" id="9808145at2"/>
<dbReference type="Proteomes" id="UP000007058">
    <property type="component" value="Chromosome"/>
</dbReference>
<dbReference type="GO" id="GO:0005829">
    <property type="term" value="C:cytosol"/>
    <property type="evidence" value="ECO:0007669"/>
    <property type="project" value="TreeGrafter"/>
</dbReference>
<dbReference type="GO" id="GO:0009318">
    <property type="term" value="C:exodeoxyribonuclease VII complex"/>
    <property type="evidence" value="ECO:0007669"/>
    <property type="project" value="InterPro"/>
</dbReference>
<dbReference type="GO" id="GO:0008855">
    <property type="term" value="F:exodeoxyribonuclease VII activity"/>
    <property type="evidence" value="ECO:0007669"/>
    <property type="project" value="UniProtKB-UniRule"/>
</dbReference>
<dbReference type="GO" id="GO:0006308">
    <property type="term" value="P:DNA catabolic process"/>
    <property type="evidence" value="ECO:0007669"/>
    <property type="project" value="UniProtKB-UniRule"/>
</dbReference>
<dbReference type="Gene3D" id="1.10.287.1040">
    <property type="entry name" value="Exonuclease VII, small subunit"/>
    <property type="match status" value="1"/>
</dbReference>
<dbReference type="HAMAP" id="MF_00337">
    <property type="entry name" value="Exonuc_7_S"/>
    <property type="match status" value="1"/>
</dbReference>
<dbReference type="InterPro" id="IPR003761">
    <property type="entry name" value="Exonuc_VII_S"/>
</dbReference>
<dbReference type="InterPro" id="IPR037004">
    <property type="entry name" value="Exonuc_VII_ssu_sf"/>
</dbReference>
<dbReference type="NCBIfam" id="NF002139">
    <property type="entry name" value="PRK00977.1-3"/>
    <property type="match status" value="1"/>
</dbReference>
<dbReference type="NCBIfam" id="TIGR01280">
    <property type="entry name" value="xseB"/>
    <property type="match status" value="1"/>
</dbReference>
<dbReference type="PANTHER" id="PTHR34137">
    <property type="entry name" value="EXODEOXYRIBONUCLEASE 7 SMALL SUBUNIT"/>
    <property type="match status" value="1"/>
</dbReference>
<dbReference type="PANTHER" id="PTHR34137:SF1">
    <property type="entry name" value="EXODEOXYRIBONUCLEASE 7 SMALL SUBUNIT"/>
    <property type="match status" value="1"/>
</dbReference>
<dbReference type="Pfam" id="PF02609">
    <property type="entry name" value="Exonuc_VII_S"/>
    <property type="match status" value="1"/>
</dbReference>
<dbReference type="SUPFAM" id="SSF116842">
    <property type="entry name" value="XseB-like"/>
    <property type="match status" value="1"/>
</dbReference>
<proteinExistence type="inferred from homology"/>
<evidence type="ECO:0000255" key="1">
    <source>
        <dbReference type="HAMAP-Rule" id="MF_00337"/>
    </source>
</evidence>